<dbReference type="EMBL" id="AL591983">
    <property type="protein sequence ID" value="CAD00566.1"/>
    <property type="molecule type" value="Genomic_DNA"/>
</dbReference>
<dbReference type="PIR" id="AH1385">
    <property type="entry name" value="AH1385"/>
</dbReference>
<dbReference type="RefSeq" id="NP_466011.1">
    <property type="nucleotide sequence ID" value="NC_003210.1"/>
</dbReference>
<dbReference type="RefSeq" id="WP_010990003.1">
    <property type="nucleotide sequence ID" value="NZ_CP149495.1"/>
</dbReference>
<dbReference type="SMR" id="Q8Y4F6"/>
<dbReference type="STRING" id="169963.gene:17595199"/>
<dbReference type="PaxDb" id="169963-lmo2488"/>
<dbReference type="EnsemblBacteria" id="CAD00566">
    <property type="protein sequence ID" value="CAD00566"/>
    <property type="gene ID" value="CAD00566"/>
</dbReference>
<dbReference type="GeneID" id="987320"/>
<dbReference type="KEGG" id="lmo:lmo2488"/>
<dbReference type="PATRIC" id="fig|169963.11.peg.2548"/>
<dbReference type="eggNOG" id="COG0178">
    <property type="taxonomic scope" value="Bacteria"/>
</dbReference>
<dbReference type="HOGENOM" id="CLU_001370_0_2_9"/>
<dbReference type="OrthoDB" id="9809851at2"/>
<dbReference type="PhylomeDB" id="Q8Y4F6"/>
<dbReference type="BioCyc" id="LMON169963:LMO2488-MONOMER"/>
<dbReference type="Proteomes" id="UP000000817">
    <property type="component" value="Chromosome"/>
</dbReference>
<dbReference type="GO" id="GO:0005737">
    <property type="term" value="C:cytoplasm"/>
    <property type="evidence" value="ECO:0007669"/>
    <property type="project" value="UniProtKB-SubCell"/>
</dbReference>
<dbReference type="GO" id="GO:0009380">
    <property type="term" value="C:excinuclease repair complex"/>
    <property type="evidence" value="ECO:0007669"/>
    <property type="project" value="InterPro"/>
</dbReference>
<dbReference type="GO" id="GO:0005524">
    <property type="term" value="F:ATP binding"/>
    <property type="evidence" value="ECO:0007669"/>
    <property type="project" value="UniProtKB-UniRule"/>
</dbReference>
<dbReference type="GO" id="GO:0016887">
    <property type="term" value="F:ATP hydrolysis activity"/>
    <property type="evidence" value="ECO:0007669"/>
    <property type="project" value="InterPro"/>
</dbReference>
<dbReference type="GO" id="GO:0003677">
    <property type="term" value="F:DNA binding"/>
    <property type="evidence" value="ECO:0007669"/>
    <property type="project" value="UniProtKB-UniRule"/>
</dbReference>
<dbReference type="GO" id="GO:0009381">
    <property type="term" value="F:excinuclease ABC activity"/>
    <property type="evidence" value="ECO:0007669"/>
    <property type="project" value="UniProtKB-UniRule"/>
</dbReference>
<dbReference type="GO" id="GO:0008270">
    <property type="term" value="F:zinc ion binding"/>
    <property type="evidence" value="ECO:0007669"/>
    <property type="project" value="UniProtKB-UniRule"/>
</dbReference>
<dbReference type="GO" id="GO:0006289">
    <property type="term" value="P:nucleotide-excision repair"/>
    <property type="evidence" value="ECO:0007669"/>
    <property type="project" value="UniProtKB-UniRule"/>
</dbReference>
<dbReference type="GO" id="GO:0009432">
    <property type="term" value="P:SOS response"/>
    <property type="evidence" value="ECO:0007669"/>
    <property type="project" value="UniProtKB-UniRule"/>
</dbReference>
<dbReference type="CDD" id="cd03270">
    <property type="entry name" value="ABC_UvrA_I"/>
    <property type="match status" value="1"/>
</dbReference>
<dbReference type="CDD" id="cd03271">
    <property type="entry name" value="ABC_UvrA_II"/>
    <property type="match status" value="1"/>
</dbReference>
<dbReference type="FunFam" id="1.20.1580.10:FF:000002">
    <property type="entry name" value="UvrABC system protein A"/>
    <property type="match status" value="1"/>
</dbReference>
<dbReference type="FunFam" id="3.40.50.300:FF:000028">
    <property type="entry name" value="UvrABC system protein A"/>
    <property type="match status" value="1"/>
</dbReference>
<dbReference type="Gene3D" id="1.10.8.280">
    <property type="entry name" value="ABC transporter ATPase domain-like"/>
    <property type="match status" value="1"/>
</dbReference>
<dbReference type="Gene3D" id="1.20.1580.10">
    <property type="entry name" value="ABC transporter ATPase like domain"/>
    <property type="match status" value="2"/>
</dbReference>
<dbReference type="Gene3D" id="3.30.1490.20">
    <property type="entry name" value="ATP-grasp fold, A domain"/>
    <property type="match status" value="1"/>
</dbReference>
<dbReference type="Gene3D" id="3.40.50.300">
    <property type="entry name" value="P-loop containing nucleotide triphosphate hydrolases"/>
    <property type="match status" value="2"/>
</dbReference>
<dbReference type="HAMAP" id="MF_00205">
    <property type="entry name" value="UvrA"/>
    <property type="match status" value="1"/>
</dbReference>
<dbReference type="InterPro" id="IPR003439">
    <property type="entry name" value="ABC_transporter-like_ATP-bd"/>
</dbReference>
<dbReference type="InterPro" id="IPR017871">
    <property type="entry name" value="ABC_transporter-like_CS"/>
</dbReference>
<dbReference type="InterPro" id="IPR013815">
    <property type="entry name" value="ATP_grasp_subdomain_1"/>
</dbReference>
<dbReference type="InterPro" id="IPR027417">
    <property type="entry name" value="P-loop_NTPase"/>
</dbReference>
<dbReference type="InterPro" id="IPR004602">
    <property type="entry name" value="UvrA"/>
</dbReference>
<dbReference type="InterPro" id="IPR041552">
    <property type="entry name" value="UvrA_DNA-bd"/>
</dbReference>
<dbReference type="InterPro" id="IPR041102">
    <property type="entry name" value="UvrA_inter"/>
</dbReference>
<dbReference type="NCBIfam" id="NF001503">
    <property type="entry name" value="PRK00349.1"/>
    <property type="match status" value="1"/>
</dbReference>
<dbReference type="NCBIfam" id="TIGR00630">
    <property type="entry name" value="uvra"/>
    <property type="match status" value="1"/>
</dbReference>
<dbReference type="PANTHER" id="PTHR43152">
    <property type="entry name" value="UVRABC SYSTEM PROTEIN A"/>
    <property type="match status" value="1"/>
</dbReference>
<dbReference type="PANTHER" id="PTHR43152:SF3">
    <property type="entry name" value="UVRABC SYSTEM PROTEIN A"/>
    <property type="match status" value="1"/>
</dbReference>
<dbReference type="Pfam" id="PF17755">
    <property type="entry name" value="UvrA_DNA-bind"/>
    <property type="match status" value="1"/>
</dbReference>
<dbReference type="Pfam" id="PF17760">
    <property type="entry name" value="UvrA_inter"/>
    <property type="match status" value="1"/>
</dbReference>
<dbReference type="SUPFAM" id="SSF52540">
    <property type="entry name" value="P-loop containing nucleoside triphosphate hydrolases"/>
    <property type="match status" value="2"/>
</dbReference>
<dbReference type="PROSITE" id="PS00211">
    <property type="entry name" value="ABC_TRANSPORTER_1"/>
    <property type="match status" value="2"/>
</dbReference>
<dbReference type="PROSITE" id="PS50893">
    <property type="entry name" value="ABC_TRANSPORTER_2"/>
    <property type="match status" value="1"/>
</dbReference>
<feature type="chain" id="PRO_0000093062" description="UvrABC system protein A">
    <location>
        <begin position="1"/>
        <end position="956"/>
    </location>
</feature>
<feature type="domain" description="ABC transporter 1" evidence="1">
    <location>
        <begin position="309"/>
        <end position="587"/>
    </location>
</feature>
<feature type="domain" description="ABC transporter 2" evidence="1">
    <location>
        <begin position="607"/>
        <end position="936"/>
    </location>
</feature>
<feature type="zinc finger region" description="C4-type" evidence="1">
    <location>
        <begin position="252"/>
        <end position="279"/>
    </location>
</feature>
<feature type="zinc finger region" description="C4-type" evidence="1">
    <location>
        <begin position="738"/>
        <end position="764"/>
    </location>
</feature>
<feature type="binding site" evidence="1">
    <location>
        <begin position="33"/>
        <end position="40"/>
    </location>
    <ligand>
        <name>ATP</name>
        <dbReference type="ChEBI" id="CHEBI:30616"/>
    </ligand>
</feature>
<feature type="binding site" evidence="1">
    <location>
        <begin position="639"/>
        <end position="646"/>
    </location>
    <ligand>
        <name>ATP</name>
        <dbReference type="ChEBI" id="CHEBI:30616"/>
    </ligand>
</feature>
<accession>Q8Y4F6</accession>
<reference key="1">
    <citation type="journal article" date="2001" name="Science">
        <title>Comparative genomics of Listeria species.</title>
        <authorList>
            <person name="Glaser P."/>
            <person name="Frangeul L."/>
            <person name="Buchrieser C."/>
            <person name="Rusniok C."/>
            <person name="Amend A."/>
            <person name="Baquero F."/>
            <person name="Berche P."/>
            <person name="Bloecker H."/>
            <person name="Brandt P."/>
            <person name="Chakraborty T."/>
            <person name="Charbit A."/>
            <person name="Chetouani F."/>
            <person name="Couve E."/>
            <person name="de Daruvar A."/>
            <person name="Dehoux P."/>
            <person name="Domann E."/>
            <person name="Dominguez-Bernal G."/>
            <person name="Duchaud E."/>
            <person name="Durant L."/>
            <person name="Dussurget O."/>
            <person name="Entian K.-D."/>
            <person name="Fsihi H."/>
            <person name="Garcia-del Portillo F."/>
            <person name="Garrido P."/>
            <person name="Gautier L."/>
            <person name="Goebel W."/>
            <person name="Gomez-Lopez N."/>
            <person name="Hain T."/>
            <person name="Hauf J."/>
            <person name="Jackson D."/>
            <person name="Jones L.-M."/>
            <person name="Kaerst U."/>
            <person name="Kreft J."/>
            <person name="Kuhn M."/>
            <person name="Kunst F."/>
            <person name="Kurapkat G."/>
            <person name="Madueno E."/>
            <person name="Maitournam A."/>
            <person name="Mata Vicente J."/>
            <person name="Ng E."/>
            <person name="Nedjari H."/>
            <person name="Nordsiek G."/>
            <person name="Novella S."/>
            <person name="de Pablos B."/>
            <person name="Perez-Diaz J.-C."/>
            <person name="Purcell R."/>
            <person name="Remmel B."/>
            <person name="Rose M."/>
            <person name="Schlueter T."/>
            <person name="Simoes N."/>
            <person name="Tierrez A."/>
            <person name="Vazquez-Boland J.-A."/>
            <person name="Voss H."/>
            <person name="Wehland J."/>
            <person name="Cossart P."/>
        </authorList>
    </citation>
    <scope>NUCLEOTIDE SEQUENCE [LARGE SCALE GENOMIC DNA]</scope>
    <source>
        <strain>ATCC BAA-679 / EGD-e</strain>
    </source>
</reference>
<evidence type="ECO:0000255" key="1">
    <source>
        <dbReference type="HAMAP-Rule" id="MF_00205"/>
    </source>
</evidence>
<name>UVRA_LISMO</name>
<keyword id="KW-0067">ATP-binding</keyword>
<keyword id="KW-0963">Cytoplasm</keyword>
<keyword id="KW-0227">DNA damage</keyword>
<keyword id="KW-0228">DNA excision</keyword>
<keyword id="KW-0234">DNA repair</keyword>
<keyword id="KW-0238">DNA-binding</keyword>
<keyword id="KW-0267">Excision nuclease</keyword>
<keyword id="KW-0479">Metal-binding</keyword>
<keyword id="KW-0547">Nucleotide-binding</keyword>
<keyword id="KW-1185">Reference proteome</keyword>
<keyword id="KW-0677">Repeat</keyword>
<keyword id="KW-0742">SOS response</keyword>
<keyword id="KW-0862">Zinc</keyword>
<keyword id="KW-0863">Zinc-finger</keyword>
<protein>
    <recommendedName>
        <fullName evidence="1">UvrABC system protein A</fullName>
        <shortName evidence="1">UvrA protein</shortName>
    </recommendedName>
    <alternativeName>
        <fullName evidence="1">Excinuclease ABC subunit A</fullName>
    </alternativeName>
</protein>
<organism>
    <name type="scientific">Listeria monocytogenes serovar 1/2a (strain ATCC BAA-679 / EGD-e)</name>
    <dbReference type="NCBI Taxonomy" id="169963"/>
    <lineage>
        <taxon>Bacteria</taxon>
        <taxon>Bacillati</taxon>
        <taxon>Bacillota</taxon>
        <taxon>Bacilli</taxon>
        <taxon>Bacillales</taxon>
        <taxon>Listeriaceae</taxon>
        <taxon>Listeria</taxon>
    </lineage>
</organism>
<sequence>MDKEKIVIQGARAHNLKNIDVEIPRDKLVVMTGLSGSGKSSLAFDTIYAEGQRRYVESLSAYARQFLGQMDKPDVDLIEGLSPAISIDQKTTSRNPRSTVGTVTEIHDYLRLLYARVGHPVCPNHGIEITSQTIEQMVDRVLEYPEKTRIQIMAPIVSGKKGTHKKTIEEIKKEGYVRIRVDGEIYDINDEIEIEKNKKHSIEIIIDRIVIKEGINTRLYDSIEAALRLADGYAVVDIMGDKELLFSEHYACPYCGFSVGELEPRMFSFNSPFGACPTCDGLGTKLEVDVDTVIPDRSMSLNEGAIIPWRPISSQYYPQMLASACKEFGIDMDTPLEKLSKEELDIILNGSKDKEFYFEYKNDFGMTRETWIPFEGILPNIERRYRETNSDFTRDQMAQYMTDLPCPSCKGYRLKEETLSVKVNDHHIGQISEFSINEALAFFDGLELSEKETQIAAPIFKEVRARLGFLKNVGLDYLTMSRAAGTLSGGEAQRIRLATQIGSRLTGVLYILDEPSIGLHQRDNDRLISTLQSMRDIGNTLIVVEHDEDTMMAADYLIDIGPGAGEHGGRIVAAGTPEEVANNKNSITGDYLSGKKFIPVPAKRRKGNGLELEIIGAKANNLKNVNAKIPLATFSCVTGVSGSGKSSLVNEVLRKALARKLNRNHAKPGEHKEIKGIENLEKIINIDQSPIGRTPRSNPATYTGAFDDIRDLFASTNEAKVRGYKKGRFSFNVKGGRCEACKGDGIIKIEMHFLPDVYVPCEVCHGKRYNGETLDIRYKGKNIAEVLEMTVEEGLEYFTNQPRIARKLQTIVDVGLGYIRLGQPATTLSGGEAQRVKLASELHKRSNGKSFYILDEPTTGLHADDIGRLLKVLQRLVEENGDTVLVIEHNLDVIKQADYLIDLGPEGGDGGGQIIATGTPEKIARSKKSYTGKYLKPILERDKERTEERIATAKKK</sequence>
<gene>
    <name evidence="1" type="primary">uvrA</name>
    <name type="ordered locus">lmo2488</name>
</gene>
<proteinExistence type="inferred from homology"/>
<comment type="function">
    <text evidence="1">The UvrABC repair system catalyzes the recognition and processing of DNA lesions. UvrA is an ATPase and a DNA-binding protein. A damage recognition complex composed of 2 UvrA and 2 UvrB subunits scans DNA for abnormalities. When the presence of a lesion has been verified by UvrB, the UvrA molecules dissociate.</text>
</comment>
<comment type="subunit">
    <text evidence="1">Forms a heterotetramer with UvrB during the search for lesions.</text>
</comment>
<comment type="subcellular location">
    <subcellularLocation>
        <location evidence="1">Cytoplasm</location>
    </subcellularLocation>
</comment>
<comment type="similarity">
    <text evidence="1">Belongs to the ABC transporter superfamily. UvrA family.</text>
</comment>